<dbReference type="EMBL" id="CP000408">
    <property type="protein sequence ID" value="ABP91246.1"/>
    <property type="molecule type" value="Genomic_DNA"/>
</dbReference>
<dbReference type="SMR" id="A4VYQ7"/>
<dbReference type="KEGG" id="ssv:SSU98_0086"/>
<dbReference type="HOGENOM" id="CLU_065464_1_2_9"/>
<dbReference type="GO" id="GO:0022625">
    <property type="term" value="C:cytosolic large ribosomal subunit"/>
    <property type="evidence" value="ECO:0007669"/>
    <property type="project" value="TreeGrafter"/>
</dbReference>
<dbReference type="GO" id="GO:0019843">
    <property type="term" value="F:rRNA binding"/>
    <property type="evidence" value="ECO:0007669"/>
    <property type="project" value="UniProtKB-UniRule"/>
</dbReference>
<dbReference type="GO" id="GO:0003735">
    <property type="term" value="F:structural constituent of ribosome"/>
    <property type="evidence" value="ECO:0007669"/>
    <property type="project" value="InterPro"/>
</dbReference>
<dbReference type="GO" id="GO:0002181">
    <property type="term" value="P:cytoplasmic translation"/>
    <property type="evidence" value="ECO:0007669"/>
    <property type="project" value="TreeGrafter"/>
</dbReference>
<dbReference type="FunFam" id="3.90.930.12:FF:000001">
    <property type="entry name" value="50S ribosomal protein L6"/>
    <property type="match status" value="1"/>
</dbReference>
<dbReference type="FunFam" id="3.90.930.12:FF:000002">
    <property type="entry name" value="50S ribosomal protein L6"/>
    <property type="match status" value="1"/>
</dbReference>
<dbReference type="Gene3D" id="3.90.930.12">
    <property type="entry name" value="Ribosomal protein L6, alpha-beta domain"/>
    <property type="match status" value="2"/>
</dbReference>
<dbReference type="HAMAP" id="MF_01365_B">
    <property type="entry name" value="Ribosomal_uL6_B"/>
    <property type="match status" value="1"/>
</dbReference>
<dbReference type="InterPro" id="IPR000702">
    <property type="entry name" value="Ribosomal_uL6-like"/>
</dbReference>
<dbReference type="InterPro" id="IPR036789">
    <property type="entry name" value="Ribosomal_uL6-like_a/b-dom_sf"/>
</dbReference>
<dbReference type="InterPro" id="IPR020040">
    <property type="entry name" value="Ribosomal_uL6_a/b-dom"/>
</dbReference>
<dbReference type="InterPro" id="IPR019906">
    <property type="entry name" value="Ribosomal_uL6_bac-type"/>
</dbReference>
<dbReference type="InterPro" id="IPR002358">
    <property type="entry name" value="Ribosomal_uL6_CS"/>
</dbReference>
<dbReference type="NCBIfam" id="TIGR03654">
    <property type="entry name" value="L6_bact"/>
    <property type="match status" value="1"/>
</dbReference>
<dbReference type="PANTHER" id="PTHR11655">
    <property type="entry name" value="60S/50S RIBOSOMAL PROTEIN L6/L9"/>
    <property type="match status" value="1"/>
</dbReference>
<dbReference type="PANTHER" id="PTHR11655:SF14">
    <property type="entry name" value="LARGE RIBOSOMAL SUBUNIT PROTEIN UL6M"/>
    <property type="match status" value="1"/>
</dbReference>
<dbReference type="Pfam" id="PF00347">
    <property type="entry name" value="Ribosomal_L6"/>
    <property type="match status" value="2"/>
</dbReference>
<dbReference type="PIRSF" id="PIRSF002162">
    <property type="entry name" value="Ribosomal_L6"/>
    <property type="match status" value="1"/>
</dbReference>
<dbReference type="PRINTS" id="PR00059">
    <property type="entry name" value="RIBOSOMALL6"/>
</dbReference>
<dbReference type="SUPFAM" id="SSF56053">
    <property type="entry name" value="Ribosomal protein L6"/>
    <property type="match status" value="2"/>
</dbReference>
<dbReference type="PROSITE" id="PS00525">
    <property type="entry name" value="RIBOSOMAL_L6_1"/>
    <property type="match status" value="1"/>
</dbReference>
<proteinExistence type="inferred from homology"/>
<feature type="chain" id="PRO_1000055317" description="Large ribosomal subunit protein uL6">
    <location>
        <begin position="1"/>
        <end position="178"/>
    </location>
</feature>
<comment type="function">
    <text evidence="1">This protein binds to the 23S rRNA, and is important in its secondary structure. It is located near the subunit interface in the base of the L7/L12 stalk, and near the tRNA binding site of the peptidyltransferase center.</text>
</comment>
<comment type="subunit">
    <text evidence="1">Part of the 50S ribosomal subunit.</text>
</comment>
<comment type="similarity">
    <text evidence="1">Belongs to the universal ribosomal protein uL6 family.</text>
</comment>
<organism>
    <name type="scientific">Streptococcus suis (strain 98HAH33)</name>
    <dbReference type="NCBI Taxonomy" id="391296"/>
    <lineage>
        <taxon>Bacteria</taxon>
        <taxon>Bacillati</taxon>
        <taxon>Bacillota</taxon>
        <taxon>Bacilli</taxon>
        <taxon>Lactobacillales</taxon>
        <taxon>Streptococcaceae</taxon>
        <taxon>Streptococcus</taxon>
    </lineage>
</organism>
<sequence>MSRIGNKVITLPAGVELAQNNGVVTVKGPKGELTREFPTAIEIRVEGAEVTLHRPNDSKEMKTIHGTSRANLNNMVVGVSEGFKKELEMRGVGYRAQLAGNKLTLAVGKSHPDEVVAPEGITFEVPTPTQIVVSGINKEVVGQTAAYIRSLRAPEPYKGKGIRYVGEFVRRKEGKTGK</sequence>
<name>RL6_STRS2</name>
<gene>
    <name evidence="1" type="primary">rplF</name>
    <name type="ordered locus">SSU98_0086</name>
</gene>
<evidence type="ECO:0000255" key="1">
    <source>
        <dbReference type="HAMAP-Rule" id="MF_01365"/>
    </source>
</evidence>
<evidence type="ECO:0000305" key="2"/>
<keyword id="KW-0687">Ribonucleoprotein</keyword>
<keyword id="KW-0689">Ribosomal protein</keyword>
<keyword id="KW-0694">RNA-binding</keyword>
<keyword id="KW-0699">rRNA-binding</keyword>
<reference key="1">
    <citation type="journal article" date="2007" name="PLoS ONE">
        <title>A glimpse of streptococcal toxic shock syndrome from comparative genomics of S. suis 2 Chinese isolates.</title>
        <authorList>
            <person name="Chen C."/>
            <person name="Tang J."/>
            <person name="Dong W."/>
            <person name="Wang C."/>
            <person name="Feng Y."/>
            <person name="Wang J."/>
            <person name="Zheng F."/>
            <person name="Pan X."/>
            <person name="Liu D."/>
            <person name="Li M."/>
            <person name="Song Y."/>
            <person name="Zhu X."/>
            <person name="Sun H."/>
            <person name="Feng T."/>
            <person name="Guo Z."/>
            <person name="Ju A."/>
            <person name="Ge J."/>
            <person name="Dong Y."/>
            <person name="Sun W."/>
            <person name="Jiang Y."/>
            <person name="Wang J."/>
            <person name="Yan J."/>
            <person name="Yang H."/>
            <person name="Wang X."/>
            <person name="Gao G.F."/>
            <person name="Yang R."/>
            <person name="Wang J."/>
            <person name="Yu J."/>
        </authorList>
    </citation>
    <scope>NUCLEOTIDE SEQUENCE [LARGE SCALE GENOMIC DNA]</scope>
    <source>
        <strain>98HAH33</strain>
    </source>
</reference>
<protein>
    <recommendedName>
        <fullName evidence="1">Large ribosomal subunit protein uL6</fullName>
    </recommendedName>
    <alternativeName>
        <fullName evidence="2">50S ribosomal protein L6</fullName>
    </alternativeName>
</protein>
<accession>A4VYQ7</accession>